<sequence>MTSKLDQLRAMTTVVADTGDIEAVARLKPVDCTTNPTIVLKALGTPMFADAIKEAVAWGKKQGGTPDAVAAAVADRLAISVGAALSGLVPGRVSTEVDADLSFDTEASLAKARAIIAAYKERGIERDRILIKLASTWEGIRAAEVLQKEGIDCNLTLLFSKAQAVACADAKVFLISPFVGRILDWYKKSTGKDYTPEEDPGVLSVREIYNYYKANDIKTIVMGASFRSAAEVEALAGCDRLTISPNLLDELAKDEGKLERKLSPENKTSVAKIIVDEKTYRWQMNEDAMATEKLAEGIRAFAKDLGTLRAMVSKELQLAAA</sequence>
<protein>
    <recommendedName>
        <fullName evidence="2">Transaldolase</fullName>
        <ecNumber evidence="2">2.2.1.2</ecNumber>
    </recommendedName>
</protein>
<keyword id="KW-0963">Cytoplasm</keyword>
<keyword id="KW-0570">Pentose shunt</keyword>
<keyword id="KW-0704">Schiff base</keyword>
<keyword id="KW-0808">Transferase</keyword>
<name>TAL_RHIR8</name>
<proteinExistence type="inferred from homology"/>
<accession>B9JAX6</accession>
<dbReference type="EC" id="2.2.1.2" evidence="2"/>
<dbReference type="EMBL" id="CP000628">
    <property type="protein sequence ID" value="ACM27810.1"/>
    <property type="molecule type" value="Genomic_DNA"/>
</dbReference>
<dbReference type="RefSeq" id="WP_012652443.1">
    <property type="nucleotide sequence ID" value="NC_011985.1"/>
</dbReference>
<dbReference type="SMR" id="B9JAX6"/>
<dbReference type="STRING" id="311403.Arad_3999"/>
<dbReference type="KEGG" id="ara:Arad_3999"/>
<dbReference type="eggNOG" id="COG0176">
    <property type="taxonomic scope" value="Bacteria"/>
</dbReference>
<dbReference type="HOGENOM" id="CLU_047470_0_1_5"/>
<dbReference type="UniPathway" id="UPA00115">
    <property type="reaction ID" value="UER00414"/>
</dbReference>
<dbReference type="Proteomes" id="UP000001600">
    <property type="component" value="Chromosome 1"/>
</dbReference>
<dbReference type="GO" id="GO:0005829">
    <property type="term" value="C:cytosol"/>
    <property type="evidence" value="ECO:0007669"/>
    <property type="project" value="TreeGrafter"/>
</dbReference>
<dbReference type="GO" id="GO:0004801">
    <property type="term" value="F:transaldolase activity"/>
    <property type="evidence" value="ECO:0000250"/>
    <property type="project" value="UniProtKB"/>
</dbReference>
<dbReference type="GO" id="GO:0005975">
    <property type="term" value="P:carbohydrate metabolic process"/>
    <property type="evidence" value="ECO:0007669"/>
    <property type="project" value="InterPro"/>
</dbReference>
<dbReference type="GO" id="GO:0006098">
    <property type="term" value="P:pentose-phosphate shunt"/>
    <property type="evidence" value="ECO:0007669"/>
    <property type="project" value="UniProtKB-UniRule"/>
</dbReference>
<dbReference type="CDD" id="cd00957">
    <property type="entry name" value="Transaldolase_TalAB"/>
    <property type="match status" value="1"/>
</dbReference>
<dbReference type="FunFam" id="3.20.20.70:FF:000131">
    <property type="entry name" value="Transaldolase"/>
    <property type="match status" value="1"/>
</dbReference>
<dbReference type="Gene3D" id="3.20.20.70">
    <property type="entry name" value="Aldolase class I"/>
    <property type="match status" value="1"/>
</dbReference>
<dbReference type="HAMAP" id="MF_00492">
    <property type="entry name" value="Transaldolase_1"/>
    <property type="match status" value="1"/>
</dbReference>
<dbReference type="InterPro" id="IPR013785">
    <property type="entry name" value="Aldolase_TIM"/>
</dbReference>
<dbReference type="InterPro" id="IPR001585">
    <property type="entry name" value="TAL/FSA"/>
</dbReference>
<dbReference type="InterPro" id="IPR004730">
    <property type="entry name" value="Transaldolase_1"/>
</dbReference>
<dbReference type="InterPro" id="IPR018225">
    <property type="entry name" value="Transaldolase_AS"/>
</dbReference>
<dbReference type="NCBIfam" id="TIGR00874">
    <property type="entry name" value="talAB"/>
    <property type="match status" value="1"/>
</dbReference>
<dbReference type="PANTHER" id="PTHR10683">
    <property type="entry name" value="TRANSALDOLASE"/>
    <property type="match status" value="1"/>
</dbReference>
<dbReference type="PANTHER" id="PTHR10683:SF18">
    <property type="entry name" value="TRANSALDOLASE"/>
    <property type="match status" value="1"/>
</dbReference>
<dbReference type="Pfam" id="PF00923">
    <property type="entry name" value="TAL_FSA"/>
    <property type="match status" value="1"/>
</dbReference>
<dbReference type="SUPFAM" id="SSF51569">
    <property type="entry name" value="Aldolase"/>
    <property type="match status" value="1"/>
</dbReference>
<dbReference type="PROSITE" id="PS01054">
    <property type="entry name" value="TRANSALDOLASE_1"/>
    <property type="match status" value="1"/>
</dbReference>
<dbReference type="PROSITE" id="PS00958">
    <property type="entry name" value="TRANSALDOLASE_2"/>
    <property type="match status" value="1"/>
</dbReference>
<evidence type="ECO:0000250" key="1"/>
<evidence type="ECO:0000255" key="2">
    <source>
        <dbReference type="HAMAP-Rule" id="MF_00492"/>
    </source>
</evidence>
<gene>
    <name evidence="2" type="primary">tal</name>
    <name type="ordered locus">Arad_3999</name>
</gene>
<organism>
    <name type="scientific">Rhizobium rhizogenes (strain K84 / ATCC BAA-868)</name>
    <name type="common">Agrobacterium radiobacter</name>
    <dbReference type="NCBI Taxonomy" id="311403"/>
    <lineage>
        <taxon>Bacteria</taxon>
        <taxon>Pseudomonadati</taxon>
        <taxon>Pseudomonadota</taxon>
        <taxon>Alphaproteobacteria</taxon>
        <taxon>Hyphomicrobiales</taxon>
        <taxon>Rhizobiaceae</taxon>
        <taxon>Rhizobium/Agrobacterium group</taxon>
        <taxon>Rhizobium</taxon>
    </lineage>
</organism>
<reference key="1">
    <citation type="journal article" date="2009" name="J. Bacteriol.">
        <title>Genome sequences of three Agrobacterium biovars help elucidate the evolution of multichromosome genomes in bacteria.</title>
        <authorList>
            <person name="Slater S.C."/>
            <person name="Goldman B.S."/>
            <person name="Goodner B."/>
            <person name="Setubal J.C."/>
            <person name="Farrand S.K."/>
            <person name="Nester E.W."/>
            <person name="Burr T.J."/>
            <person name="Banta L."/>
            <person name="Dickerman A.W."/>
            <person name="Paulsen I."/>
            <person name="Otten L."/>
            <person name="Suen G."/>
            <person name="Welch R."/>
            <person name="Almeida N.F."/>
            <person name="Arnold F."/>
            <person name="Burton O.T."/>
            <person name="Du Z."/>
            <person name="Ewing A."/>
            <person name="Godsy E."/>
            <person name="Heisel S."/>
            <person name="Houmiel K.L."/>
            <person name="Jhaveri J."/>
            <person name="Lu J."/>
            <person name="Miller N.M."/>
            <person name="Norton S."/>
            <person name="Chen Q."/>
            <person name="Phoolcharoen W."/>
            <person name="Ohlin V."/>
            <person name="Ondrusek D."/>
            <person name="Pride N."/>
            <person name="Stricklin S.L."/>
            <person name="Sun J."/>
            <person name="Wheeler C."/>
            <person name="Wilson L."/>
            <person name="Zhu H."/>
            <person name="Wood D.W."/>
        </authorList>
    </citation>
    <scope>NUCLEOTIDE SEQUENCE [LARGE SCALE GENOMIC DNA]</scope>
    <source>
        <strain>K84 / ATCC BAA-868</strain>
    </source>
</reference>
<comment type="function">
    <text evidence="2">Transaldolase is important for the balance of metabolites in the pentose-phosphate pathway.</text>
</comment>
<comment type="catalytic activity">
    <reaction evidence="2">
        <text>D-sedoheptulose 7-phosphate + D-glyceraldehyde 3-phosphate = D-erythrose 4-phosphate + beta-D-fructose 6-phosphate</text>
        <dbReference type="Rhea" id="RHEA:17053"/>
        <dbReference type="ChEBI" id="CHEBI:16897"/>
        <dbReference type="ChEBI" id="CHEBI:57483"/>
        <dbReference type="ChEBI" id="CHEBI:57634"/>
        <dbReference type="ChEBI" id="CHEBI:59776"/>
        <dbReference type="EC" id="2.2.1.2"/>
    </reaction>
</comment>
<comment type="pathway">
    <text evidence="2">Carbohydrate degradation; pentose phosphate pathway; D-glyceraldehyde 3-phosphate and beta-D-fructose 6-phosphate from D-ribose 5-phosphate and D-xylulose 5-phosphate (non-oxidative stage): step 2/3.</text>
</comment>
<comment type="subunit">
    <text evidence="1">Homodimer.</text>
</comment>
<comment type="subcellular location">
    <subcellularLocation>
        <location evidence="2">Cytoplasm</location>
    </subcellularLocation>
</comment>
<comment type="similarity">
    <text evidence="2">Belongs to the transaldolase family. Type 1 subfamily.</text>
</comment>
<feature type="chain" id="PRO_1000198449" description="Transaldolase">
    <location>
        <begin position="1"/>
        <end position="321"/>
    </location>
</feature>
<feature type="active site" description="Schiff-base intermediate with substrate" evidence="2">
    <location>
        <position position="132"/>
    </location>
</feature>